<evidence type="ECO:0000255" key="1">
    <source>
        <dbReference type="HAMAP-Rule" id="MF_01307"/>
    </source>
</evidence>
<evidence type="ECO:0000256" key="2">
    <source>
        <dbReference type="SAM" id="MobiDB-lite"/>
    </source>
</evidence>
<evidence type="ECO:0000305" key="3"/>
<sequence>MAERDNNRRGNRRDRDEAPEFADRLVAINRVSKTVKGGKRFGFAALVVVGDQKGRVGFGKGKAKEVPEAIRKATEQAKRQMIRVQLREGRTLHHDMEGRHGAGKVVMRSAPEGTGIIAGGPMRAVFEMLGVKDVVSKSIGSQNPYNMIRATMDGLRKESSPRSVAQRRGKKVADILPKVDAAPAPAETAEA</sequence>
<comment type="function">
    <text evidence="1">With S4 and S12 plays an important role in translational accuracy.</text>
</comment>
<comment type="function">
    <text evidence="1">Located at the back of the 30S subunit body where it stabilizes the conformation of the head with respect to the body.</text>
</comment>
<comment type="subunit">
    <text evidence="1">Part of the 30S ribosomal subunit. Contacts proteins S4 and S8.</text>
</comment>
<comment type="domain">
    <text>The N-terminal domain interacts with the head of the 30S subunit; the C-terminal domain interacts with the body and contacts protein S4. The interaction surface between S4 and S5 is involved in control of translational fidelity.</text>
</comment>
<comment type="similarity">
    <text evidence="1">Belongs to the universal ribosomal protein uS5 family.</text>
</comment>
<accession>Q16AC7</accession>
<dbReference type="EMBL" id="CP000362">
    <property type="protein sequence ID" value="ABG31066.1"/>
    <property type="molecule type" value="Genomic_DNA"/>
</dbReference>
<dbReference type="RefSeq" id="WP_011567686.1">
    <property type="nucleotide sequence ID" value="NC_008209.1"/>
</dbReference>
<dbReference type="SMR" id="Q16AC7"/>
<dbReference type="STRING" id="375451.RD1_1428"/>
<dbReference type="KEGG" id="rde:RD1_1428"/>
<dbReference type="eggNOG" id="COG0098">
    <property type="taxonomic scope" value="Bacteria"/>
</dbReference>
<dbReference type="HOGENOM" id="CLU_065898_2_2_5"/>
<dbReference type="OrthoDB" id="9809045at2"/>
<dbReference type="Proteomes" id="UP000007029">
    <property type="component" value="Chromosome"/>
</dbReference>
<dbReference type="GO" id="GO:0015935">
    <property type="term" value="C:small ribosomal subunit"/>
    <property type="evidence" value="ECO:0007669"/>
    <property type="project" value="InterPro"/>
</dbReference>
<dbReference type="GO" id="GO:0019843">
    <property type="term" value="F:rRNA binding"/>
    <property type="evidence" value="ECO:0007669"/>
    <property type="project" value="UniProtKB-UniRule"/>
</dbReference>
<dbReference type="GO" id="GO:0003735">
    <property type="term" value="F:structural constituent of ribosome"/>
    <property type="evidence" value="ECO:0007669"/>
    <property type="project" value="InterPro"/>
</dbReference>
<dbReference type="GO" id="GO:0006412">
    <property type="term" value="P:translation"/>
    <property type="evidence" value="ECO:0007669"/>
    <property type="project" value="UniProtKB-UniRule"/>
</dbReference>
<dbReference type="FunFam" id="3.30.160.20:FF:000001">
    <property type="entry name" value="30S ribosomal protein S5"/>
    <property type="match status" value="1"/>
</dbReference>
<dbReference type="FunFam" id="3.30.230.10:FF:000002">
    <property type="entry name" value="30S ribosomal protein S5"/>
    <property type="match status" value="1"/>
</dbReference>
<dbReference type="Gene3D" id="3.30.160.20">
    <property type="match status" value="1"/>
</dbReference>
<dbReference type="Gene3D" id="3.30.230.10">
    <property type="match status" value="1"/>
</dbReference>
<dbReference type="HAMAP" id="MF_01307_B">
    <property type="entry name" value="Ribosomal_uS5_B"/>
    <property type="match status" value="1"/>
</dbReference>
<dbReference type="InterPro" id="IPR020568">
    <property type="entry name" value="Ribosomal_Su5_D2-typ_SF"/>
</dbReference>
<dbReference type="InterPro" id="IPR000851">
    <property type="entry name" value="Ribosomal_uS5"/>
</dbReference>
<dbReference type="InterPro" id="IPR005712">
    <property type="entry name" value="Ribosomal_uS5_bac-type"/>
</dbReference>
<dbReference type="InterPro" id="IPR005324">
    <property type="entry name" value="Ribosomal_uS5_C"/>
</dbReference>
<dbReference type="InterPro" id="IPR013810">
    <property type="entry name" value="Ribosomal_uS5_N"/>
</dbReference>
<dbReference type="InterPro" id="IPR018192">
    <property type="entry name" value="Ribosomal_uS5_N_CS"/>
</dbReference>
<dbReference type="InterPro" id="IPR014721">
    <property type="entry name" value="Ribsml_uS5_D2-typ_fold_subgr"/>
</dbReference>
<dbReference type="NCBIfam" id="TIGR01021">
    <property type="entry name" value="rpsE_bact"/>
    <property type="match status" value="1"/>
</dbReference>
<dbReference type="PANTHER" id="PTHR48277">
    <property type="entry name" value="MITOCHONDRIAL RIBOSOMAL PROTEIN S5"/>
    <property type="match status" value="1"/>
</dbReference>
<dbReference type="PANTHER" id="PTHR48277:SF1">
    <property type="entry name" value="MITOCHONDRIAL RIBOSOMAL PROTEIN S5"/>
    <property type="match status" value="1"/>
</dbReference>
<dbReference type="Pfam" id="PF00333">
    <property type="entry name" value="Ribosomal_S5"/>
    <property type="match status" value="1"/>
</dbReference>
<dbReference type="Pfam" id="PF03719">
    <property type="entry name" value="Ribosomal_S5_C"/>
    <property type="match status" value="1"/>
</dbReference>
<dbReference type="SUPFAM" id="SSF54768">
    <property type="entry name" value="dsRNA-binding domain-like"/>
    <property type="match status" value="1"/>
</dbReference>
<dbReference type="SUPFAM" id="SSF54211">
    <property type="entry name" value="Ribosomal protein S5 domain 2-like"/>
    <property type="match status" value="1"/>
</dbReference>
<dbReference type="PROSITE" id="PS00585">
    <property type="entry name" value="RIBOSOMAL_S5"/>
    <property type="match status" value="1"/>
</dbReference>
<dbReference type="PROSITE" id="PS50881">
    <property type="entry name" value="S5_DSRBD"/>
    <property type="match status" value="1"/>
</dbReference>
<gene>
    <name evidence="1" type="primary">rpsE</name>
    <name type="ordered locus">RD1_1428</name>
</gene>
<feature type="chain" id="PRO_1000086050" description="Small ribosomal subunit protein uS5">
    <location>
        <begin position="1"/>
        <end position="191"/>
    </location>
</feature>
<feature type="domain" description="S5 DRBM" evidence="1">
    <location>
        <begin position="21"/>
        <end position="84"/>
    </location>
</feature>
<feature type="region of interest" description="Disordered" evidence="2">
    <location>
        <begin position="155"/>
        <end position="191"/>
    </location>
</feature>
<feature type="compositionally biased region" description="Low complexity" evidence="2">
    <location>
        <begin position="181"/>
        <end position="191"/>
    </location>
</feature>
<name>RS5_ROSDO</name>
<reference key="1">
    <citation type="journal article" date="2007" name="J. Bacteriol.">
        <title>The complete genome sequence of Roseobacter denitrificans reveals a mixotrophic rather than photosynthetic metabolism.</title>
        <authorList>
            <person name="Swingley W.D."/>
            <person name="Sadekar S."/>
            <person name="Mastrian S.D."/>
            <person name="Matthies H.J."/>
            <person name="Hao J."/>
            <person name="Ramos H."/>
            <person name="Acharya C.R."/>
            <person name="Conrad A.L."/>
            <person name="Taylor H.L."/>
            <person name="Dejesa L.C."/>
            <person name="Shah M.K."/>
            <person name="O'Huallachain M.E."/>
            <person name="Lince M.T."/>
            <person name="Blankenship R.E."/>
            <person name="Beatty J.T."/>
            <person name="Touchman J.W."/>
        </authorList>
    </citation>
    <scope>NUCLEOTIDE SEQUENCE [LARGE SCALE GENOMIC DNA]</scope>
    <source>
        <strain>ATCC 33942 / OCh 114</strain>
    </source>
</reference>
<proteinExistence type="inferred from homology"/>
<organism>
    <name type="scientific">Roseobacter denitrificans (strain ATCC 33942 / OCh 114)</name>
    <name type="common">Erythrobacter sp. (strain OCh 114)</name>
    <name type="synonym">Roseobacter denitrificans</name>
    <dbReference type="NCBI Taxonomy" id="375451"/>
    <lineage>
        <taxon>Bacteria</taxon>
        <taxon>Pseudomonadati</taxon>
        <taxon>Pseudomonadota</taxon>
        <taxon>Alphaproteobacteria</taxon>
        <taxon>Rhodobacterales</taxon>
        <taxon>Roseobacteraceae</taxon>
        <taxon>Roseobacter</taxon>
    </lineage>
</organism>
<protein>
    <recommendedName>
        <fullName evidence="1">Small ribosomal subunit protein uS5</fullName>
    </recommendedName>
    <alternativeName>
        <fullName evidence="3">30S ribosomal protein S5</fullName>
    </alternativeName>
</protein>
<keyword id="KW-1185">Reference proteome</keyword>
<keyword id="KW-0687">Ribonucleoprotein</keyword>
<keyword id="KW-0689">Ribosomal protein</keyword>
<keyword id="KW-0694">RNA-binding</keyword>
<keyword id="KW-0699">rRNA-binding</keyword>